<proteinExistence type="evidence at protein level"/>
<gene>
    <name type="primary">P4HA2</name>
    <name type="ORF">UNQ290/PRO330</name>
</gene>
<sequence length="535" mass="60902">MKLWVSALLMAWFGVLSCVQAEFFTSIGHMTDLIYAEKELVQSLKEYILVEEAKLSKIKSWANKMEALTSKSAADAEGYLAHPVNAYKLVKRLNTDWPALEDLVLQDSAAGFIANLSVQRQFFPTDEDEIGAAKALMRLQDTYRLDPGTISRGELPGTKYQAMLSVDDCFGMGRSAYNEGDYYHTVLWMEQVLKQLDAGEEATTTKSQVLDYLSYAVFQLGDLHRALELTRRLLSLDPSHERAGGNLRYFEQLLEEEREKTLTNQTEAELATPEGIYERPVDYLPERDVYESLCRGEGVKLTPRRQKRLFCRYHHGNRAPQLLIAPFKEEDEWDSPHIVRYYDVMSDEEIERIKEIAKPKLARATVRDPKTGVLTVASYRVSKSSWLEEDDDPVVARVNRRMQHITGLTVKTAELLQVANYGVGGQYEPHFDFSRNDERDTFKHLGTGNRVATFLNYMSDVEAGGATVFPDLGAAIWPKKGTAVFWYNLLRSGEGDYRTRHAACPVLVGCKWVSNKWFHERGQEFLRPCGSTEVD</sequence>
<organism>
    <name type="scientific">Homo sapiens</name>
    <name type="common">Human</name>
    <dbReference type="NCBI Taxonomy" id="9606"/>
    <lineage>
        <taxon>Eukaryota</taxon>
        <taxon>Metazoa</taxon>
        <taxon>Chordata</taxon>
        <taxon>Craniata</taxon>
        <taxon>Vertebrata</taxon>
        <taxon>Euteleostomi</taxon>
        <taxon>Mammalia</taxon>
        <taxon>Eutheria</taxon>
        <taxon>Euarchontoglires</taxon>
        <taxon>Primates</taxon>
        <taxon>Haplorrhini</taxon>
        <taxon>Catarrhini</taxon>
        <taxon>Hominidae</taxon>
        <taxon>Homo</taxon>
    </lineage>
</organism>
<protein>
    <recommendedName>
        <fullName>Prolyl 4-hydroxylase subunit alpha-2</fullName>
        <shortName>4-PH alpha-2</shortName>
        <ecNumber evidence="5">1.14.11.2</ecNumber>
    </recommendedName>
    <alternativeName>
        <fullName>Procollagen-proline,2-oxoglutarate-4-dioxygenase subunit alpha-2</fullName>
    </alternativeName>
</protein>
<feature type="signal peptide" evidence="2">
    <location>
        <begin position="1"/>
        <end position="21"/>
    </location>
</feature>
<feature type="chain" id="PRO_0000022726" description="Prolyl 4-hydroxylase subunit alpha-2">
    <location>
        <begin position="22"/>
        <end position="535"/>
    </location>
</feature>
<feature type="repeat" description="TPR">
    <location>
        <begin position="207"/>
        <end position="240"/>
    </location>
</feature>
<feature type="domain" description="Fe2OG dioxygenase" evidence="3">
    <location>
        <begin position="412"/>
        <end position="520"/>
    </location>
</feature>
<feature type="binding site" evidence="3">
    <location>
        <position position="430"/>
    </location>
    <ligand>
        <name>Fe cation</name>
        <dbReference type="ChEBI" id="CHEBI:24875"/>
    </ligand>
</feature>
<feature type="binding site" evidence="3">
    <location>
        <position position="432"/>
    </location>
    <ligand>
        <name>Fe cation</name>
        <dbReference type="ChEBI" id="CHEBI:24875"/>
    </ligand>
</feature>
<feature type="binding site" evidence="3">
    <location>
        <position position="501"/>
    </location>
    <ligand>
        <name>Fe cation</name>
        <dbReference type="ChEBI" id="CHEBI:24875"/>
    </ligand>
</feature>
<feature type="binding site" evidence="3">
    <location>
        <position position="511"/>
    </location>
    <ligand>
        <name>2-oxoglutarate</name>
        <dbReference type="ChEBI" id="CHEBI:16810"/>
    </ligand>
</feature>
<feature type="modified residue" description="N6-succinyllysine" evidence="1">
    <location>
        <position position="480"/>
    </location>
</feature>
<feature type="glycosylation site" description="N-linked (GlcNAc...) asparagine" evidence="2">
    <location>
        <position position="115"/>
    </location>
</feature>
<feature type="glycosylation site" description="N-linked (GlcNAc...) asparagine" evidence="2">
    <location>
        <position position="264"/>
    </location>
</feature>
<feature type="splice variant" id="VSP_004506" description="In isoform IIa." evidence="6 7">
    <original>NDERDTFKHLGTGNRV</original>
    <variation>RPFDSGLKTEGNRL</variation>
    <location>
        <begin position="436"/>
        <end position="451"/>
    </location>
</feature>
<feature type="sequence variant" id="VAR_074026" description="In MYP25; dbSNP:rs764211125." evidence="4">
    <original>Q</original>
    <variation>R</variation>
    <location>
        <position position="140"/>
    </location>
</feature>
<feature type="sequence variant" id="VAR_074027" description="In MYP25; uncertain significance; dbSNP:rs771208496." evidence="4">
    <original>I</original>
    <variation>V</variation>
    <location>
        <position position="150"/>
    </location>
</feature>
<feature type="sequence variant" id="VAR_074028" description="In MYP25; decreases protein abundance; dbSNP:rs758872875." evidence="4">
    <original>E</original>
    <variation>K</variation>
    <location>
        <position position="291"/>
    </location>
</feature>
<feature type="helix" evidence="10">
    <location>
        <begin position="166"/>
        <end position="178"/>
    </location>
</feature>
<feature type="helix" evidence="10">
    <location>
        <begin position="182"/>
        <end position="197"/>
    </location>
</feature>
<feature type="helix" evidence="10">
    <location>
        <begin position="206"/>
        <end position="219"/>
    </location>
</feature>
<feature type="helix" evidence="10">
    <location>
        <begin position="223"/>
        <end position="236"/>
    </location>
</feature>
<feature type="helix" evidence="10">
    <location>
        <begin position="241"/>
        <end position="253"/>
    </location>
</feature>
<accession>O15460</accession>
<accession>D3DQ85</accession>
<accession>D3DQ86</accession>
<accession>Q8WWN0</accession>
<dbReference type="EC" id="1.14.11.2" evidence="5"/>
<dbReference type="EMBL" id="U90441">
    <property type="protein sequence ID" value="AAB71339.1"/>
    <property type="molecule type" value="mRNA"/>
</dbReference>
<dbReference type="EMBL" id="AJ314859">
    <property type="protein sequence ID" value="CAC85688.1"/>
    <property type="molecule type" value="Genomic_DNA"/>
</dbReference>
<dbReference type="EMBL" id="AJ314859">
    <property type="protein sequence ID" value="CAC85689.1"/>
    <property type="molecule type" value="Genomic_DNA"/>
</dbReference>
<dbReference type="EMBL" id="AY358970">
    <property type="protein sequence ID" value="AAQ89329.1"/>
    <property type="molecule type" value="mRNA"/>
</dbReference>
<dbReference type="EMBL" id="CH471062">
    <property type="protein sequence ID" value="EAW62341.1"/>
    <property type="molecule type" value="Genomic_DNA"/>
</dbReference>
<dbReference type="EMBL" id="CH471062">
    <property type="protein sequence ID" value="EAW62342.1"/>
    <property type="molecule type" value="Genomic_DNA"/>
</dbReference>
<dbReference type="EMBL" id="CH471062">
    <property type="protein sequence ID" value="EAW62343.1"/>
    <property type="molecule type" value="Genomic_DNA"/>
</dbReference>
<dbReference type="EMBL" id="CH471062">
    <property type="protein sequence ID" value="EAW62346.1"/>
    <property type="molecule type" value="Genomic_DNA"/>
</dbReference>
<dbReference type="EMBL" id="BC035813">
    <property type="protein sequence ID" value="AAH35813.1"/>
    <property type="molecule type" value="mRNA"/>
</dbReference>
<dbReference type="CCDS" id="CCDS34230.1">
    <molecule id="O15460-2"/>
</dbReference>
<dbReference type="CCDS" id="CCDS4151.1">
    <molecule id="O15460-1"/>
</dbReference>
<dbReference type="RefSeq" id="NP_001017973.1">
    <property type="nucleotide sequence ID" value="NM_001017973.1"/>
</dbReference>
<dbReference type="RefSeq" id="NP_001017974.1">
    <molecule id="O15460-2"/>
    <property type="nucleotide sequence ID" value="NM_001017974.2"/>
</dbReference>
<dbReference type="RefSeq" id="NP_001136070.1">
    <molecule id="O15460-2"/>
    <property type="nucleotide sequence ID" value="NM_001142598.2"/>
</dbReference>
<dbReference type="RefSeq" id="NP_001136071.1">
    <molecule id="O15460-1"/>
    <property type="nucleotide sequence ID" value="NM_001142599.2"/>
</dbReference>
<dbReference type="RefSeq" id="NP_001352606.1">
    <molecule id="O15460-1"/>
    <property type="nucleotide sequence ID" value="NM_001365677.2"/>
</dbReference>
<dbReference type="RefSeq" id="NP_001352607.1">
    <molecule id="O15460-2"/>
    <property type="nucleotide sequence ID" value="NM_001365678.2"/>
</dbReference>
<dbReference type="RefSeq" id="NP_001352608.1">
    <molecule id="O15460-2"/>
    <property type="nucleotide sequence ID" value="NM_001365679.2"/>
</dbReference>
<dbReference type="RefSeq" id="NP_001352609.1">
    <molecule id="O15460-2"/>
    <property type="nucleotide sequence ID" value="NM_001365680.2"/>
</dbReference>
<dbReference type="RefSeq" id="NP_004190.1">
    <molecule id="O15460-1"/>
    <property type="nucleotide sequence ID" value="NM_004199.3"/>
</dbReference>
<dbReference type="RefSeq" id="XP_005272173.1">
    <property type="nucleotide sequence ID" value="XM_005272116.4"/>
</dbReference>
<dbReference type="RefSeq" id="XP_005272174.1">
    <property type="nucleotide sequence ID" value="XM_005272117.4"/>
</dbReference>
<dbReference type="RefSeq" id="XP_005272175.1">
    <property type="nucleotide sequence ID" value="XM_005272118.4"/>
</dbReference>
<dbReference type="RefSeq" id="XP_005272176.1">
    <property type="nucleotide sequence ID" value="XM_005272119.4"/>
</dbReference>
<dbReference type="RefSeq" id="XP_005272177.1">
    <property type="nucleotide sequence ID" value="XM_005272120.4"/>
</dbReference>
<dbReference type="RefSeq" id="XP_006714791.1">
    <property type="nucleotide sequence ID" value="XM_006714728.3"/>
</dbReference>
<dbReference type="RefSeq" id="XP_006714792.1">
    <property type="nucleotide sequence ID" value="XM_006714729.3"/>
</dbReference>
<dbReference type="RefSeq" id="XP_006714793.1">
    <property type="nucleotide sequence ID" value="XM_006714730.3"/>
</dbReference>
<dbReference type="RefSeq" id="XP_016865500.1">
    <property type="nucleotide sequence ID" value="XM_017010011.1"/>
</dbReference>
<dbReference type="PDB" id="6EVL">
    <property type="method" value="X-ray"/>
    <property type="resolution" value="1.87 A"/>
    <property type="chains" value="A=163-257"/>
</dbReference>
<dbReference type="PDB" id="6EVM">
    <property type="method" value="X-ray"/>
    <property type="resolution" value="2.00 A"/>
    <property type="chains" value="A=163-257"/>
</dbReference>
<dbReference type="PDB" id="6EVN">
    <property type="method" value="X-ray"/>
    <property type="resolution" value="1.48 A"/>
    <property type="chains" value="A=163-257"/>
</dbReference>
<dbReference type="PDB" id="6EVO">
    <property type="method" value="X-ray"/>
    <property type="resolution" value="1.55 A"/>
    <property type="chains" value="A=163-257"/>
</dbReference>
<dbReference type="PDB" id="6EVP">
    <property type="method" value="X-ray"/>
    <property type="resolution" value="1.68 A"/>
    <property type="chains" value="A=163-257"/>
</dbReference>
<dbReference type="PDB" id="7ZSC">
    <property type="method" value="X-ray"/>
    <property type="resolution" value="3.85 A"/>
    <property type="chains" value="A/B=282-535"/>
</dbReference>
<dbReference type="PDBsum" id="6EVL"/>
<dbReference type="PDBsum" id="6EVM"/>
<dbReference type="PDBsum" id="6EVN"/>
<dbReference type="PDBsum" id="6EVO"/>
<dbReference type="PDBsum" id="6EVP"/>
<dbReference type="PDBsum" id="7ZSC"/>
<dbReference type="SMR" id="O15460"/>
<dbReference type="BioGRID" id="114464">
    <property type="interactions" value="148"/>
</dbReference>
<dbReference type="FunCoup" id="O15460">
    <property type="interactions" value="2728"/>
</dbReference>
<dbReference type="IntAct" id="O15460">
    <property type="interactions" value="118"/>
</dbReference>
<dbReference type="MINT" id="O15460"/>
<dbReference type="STRING" id="9606.ENSP00000384999"/>
<dbReference type="ChEMBL" id="CHEMBL5640"/>
<dbReference type="DrugBank" id="DB00172">
    <property type="generic name" value="Proline"/>
</dbReference>
<dbReference type="DrugBank" id="DB00139">
    <property type="generic name" value="Succinic acid"/>
</dbReference>
<dbReference type="GlyCosmos" id="O15460">
    <property type="glycosylation" value="3 sites, 2 glycans"/>
</dbReference>
<dbReference type="GlyGen" id="O15460">
    <property type="glycosylation" value="5 sites, 11 N-linked glycans (2 sites), 3 O-linked glycans (3 sites)"/>
</dbReference>
<dbReference type="iPTMnet" id="O15460"/>
<dbReference type="MetOSite" id="O15460"/>
<dbReference type="PhosphoSitePlus" id="O15460"/>
<dbReference type="BioMuta" id="P4HA2"/>
<dbReference type="jPOST" id="O15460"/>
<dbReference type="MassIVE" id="O15460"/>
<dbReference type="PaxDb" id="9606-ENSP00000384999"/>
<dbReference type="PeptideAtlas" id="O15460"/>
<dbReference type="ProteomicsDB" id="48680">
    <molecule id="O15460-1"/>
</dbReference>
<dbReference type="ProteomicsDB" id="48681">
    <molecule id="O15460-2"/>
</dbReference>
<dbReference type="Pumba" id="O15460"/>
<dbReference type="Antibodypedia" id="35136">
    <property type="antibodies" value="139 antibodies from 25 providers"/>
</dbReference>
<dbReference type="DNASU" id="8974"/>
<dbReference type="Ensembl" id="ENST00000166534.8">
    <molecule id="O15460-1"/>
    <property type="protein sequence ID" value="ENSP00000166534.4"/>
    <property type="gene ID" value="ENSG00000072682.20"/>
</dbReference>
<dbReference type="Ensembl" id="ENST00000360568.8">
    <molecule id="O15460-2"/>
    <property type="protein sequence ID" value="ENSP00000353772.3"/>
    <property type="gene ID" value="ENSG00000072682.20"/>
</dbReference>
<dbReference type="Ensembl" id="ENST00000379086.5">
    <molecule id="O15460-2"/>
    <property type="protein sequence ID" value="ENSP00000368379.1"/>
    <property type="gene ID" value="ENSG00000072682.20"/>
</dbReference>
<dbReference type="Ensembl" id="ENST00000379100.7">
    <molecule id="O15460-2"/>
    <property type="protein sequence ID" value="ENSP00000368394.2"/>
    <property type="gene ID" value="ENSG00000072682.20"/>
</dbReference>
<dbReference type="Ensembl" id="ENST00000379104.7">
    <molecule id="O15460-1"/>
    <property type="protein sequence ID" value="ENSP00000368398.2"/>
    <property type="gene ID" value="ENSG00000072682.20"/>
</dbReference>
<dbReference type="Ensembl" id="ENST00000401867.5">
    <molecule id="O15460-1"/>
    <property type="protein sequence ID" value="ENSP00000384999.1"/>
    <property type="gene ID" value="ENSG00000072682.20"/>
</dbReference>
<dbReference type="GeneID" id="8974"/>
<dbReference type="KEGG" id="hsa:8974"/>
<dbReference type="MANE-Select" id="ENST00000360568.8">
    <molecule id="O15460-2"/>
    <property type="protein sequence ID" value="ENSP00000353772.3"/>
    <property type="RefSeq nucleotide sequence ID" value="NM_001017974.2"/>
    <property type="RefSeq protein sequence ID" value="NP_001017974.1"/>
</dbReference>
<dbReference type="UCSC" id="uc003kwg.4">
    <molecule id="O15460-1"/>
    <property type="organism name" value="human"/>
</dbReference>
<dbReference type="AGR" id="HGNC:8547"/>
<dbReference type="CTD" id="8974"/>
<dbReference type="DisGeNET" id="8974"/>
<dbReference type="GeneCards" id="P4HA2"/>
<dbReference type="HGNC" id="HGNC:8547">
    <property type="gene designation" value="P4HA2"/>
</dbReference>
<dbReference type="HPA" id="ENSG00000072682">
    <property type="expression patterns" value="Low tissue specificity"/>
</dbReference>
<dbReference type="MalaCards" id="P4HA2"/>
<dbReference type="MIM" id="600608">
    <property type="type" value="gene"/>
</dbReference>
<dbReference type="MIM" id="617238">
    <property type="type" value="phenotype"/>
</dbReference>
<dbReference type="neXtProt" id="NX_O15460"/>
<dbReference type="OpenTargets" id="ENSG00000072682"/>
<dbReference type="Orphanet" id="397">
    <property type="disease" value="Giant cell arteritis"/>
</dbReference>
<dbReference type="PharmGKB" id="PA32875"/>
<dbReference type="VEuPathDB" id="HostDB:ENSG00000072682"/>
<dbReference type="eggNOG" id="KOG1591">
    <property type="taxonomic scope" value="Eukaryota"/>
</dbReference>
<dbReference type="GeneTree" id="ENSGT00940000157695"/>
<dbReference type="HOGENOM" id="CLU_024155_1_0_1"/>
<dbReference type="InParanoid" id="O15460"/>
<dbReference type="OMA" id="VIWMEEA"/>
<dbReference type="OrthoDB" id="420380at2759"/>
<dbReference type="PAN-GO" id="O15460">
    <property type="GO annotations" value="3 GO annotations based on evolutionary models"/>
</dbReference>
<dbReference type="PhylomeDB" id="O15460"/>
<dbReference type="TreeFam" id="TF313393"/>
<dbReference type="BRENDA" id="1.14.11.2">
    <property type="organism ID" value="2681"/>
</dbReference>
<dbReference type="PathwayCommons" id="O15460"/>
<dbReference type="Reactome" id="R-HSA-1650814">
    <property type="pathway name" value="Collagen biosynthesis and modifying enzymes"/>
</dbReference>
<dbReference type="SignaLink" id="O15460"/>
<dbReference type="SIGNOR" id="O15460"/>
<dbReference type="BioGRID-ORCS" id="8974">
    <property type="hits" value="10 hits in 1153 CRISPR screens"/>
</dbReference>
<dbReference type="ChiTaRS" id="P4HA2">
    <property type="organism name" value="human"/>
</dbReference>
<dbReference type="GeneWiki" id="P4HA2"/>
<dbReference type="GenomeRNAi" id="8974"/>
<dbReference type="Pharos" id="O15460">
    <property type="development level" value="Tbio"/>
</dbReference>
<dbReference type="PRO" id="PR:O15460"/>
<dbReference type="Proteomes" id="UP000005640">
    <property type="component" value="Chromosome 5"/>
</dbReference>
<dbReference type="RNAct" id="O15460">
    <property type="molecule type" value="protein"/>
</dbReference>
<dbReference type="Bgee" id="ENSG00000072682">
    <property type="expression patterns" value="Expressed in stromal cell of endometrium and 185 other cell types or tissues"/>
</dbReference>
<dbReference type="ExpressionAtlas" id="O15460">
    <property type="expression patterns" value="baseline and differential"/>
</dbReference>
<dbReference type="GO" id="GO:0005829">
    <property type="term" value="C:cytosol"/>
    <property type="evidence" value="ECO:0000314"/>
    <property type="project" value="HPA"/>
</dbReference>
<dbReference type="GO" id="GO:0005783">
    <property type="term" value="C:endoplasmic reticulum"/>
    <property type="evidence" value="ECO:0000314"/>
    <property type="project" value="HPA"/>
</dbReference>
<dbReference type="GO" id="GO:0005788">
    <property type="term" value="C:endoplasmic reticulum lumen"/>
    <property type="evidence" value="ECO:0000304"/>
    <property type="project" value="Reactome"/>
</dbReference>
<dbReference type="GO" id="GO:0043231">
    <property type="term" value="C:intracellular membrane-bounded organelle"/>
    <property type="evidence" value="ECO:0000314"/>
    <property type="project" value="HPA"/>
</dbReference>
<dbReference type="GO" id="GO:0005654">
    <property type="term" value="C:nucleoplasm"/>
    <property type="evidence" value="ECO:0000314"/>
    <property type="project" value="HPA"/>
</dbReference>
<dbReference type="GO" id="GO:0009055">
    <property type="term" value="F:electron transfer activity"/>
    <property type="evidence" value="ECO:0000304"/>
    <property type="project" value="UniProtKB"/>
</dbReference>
<dbReference type="GO" id="GO:0005506">
    <property type="term" value="F:iron ion binding"/>
    <property type="evidence" value="ECO:0007669"/>
    <property type="project" value="InterPro"/>
</dbReference>
<dbReference type="GO" id="GO:0031418">
    <property type="term" value="F:L-ascorbic acid binding"/>
    <property type="evidence" value="ECO:0007669"/>
    <property type="project" value="UniProtKB-KW"/>
</dbReference>
<dbReference type="GO" id="GO:0004656">
    <property type="term" value="F:procollagen-proline 4-dioxygenase activity"/>
    <property type="evidence" value="ECO:0000314"/>
    <property type="project" value="UniProtKB"/>
</dbReference>
<dbReference type="FunFam" id="1.25.40.10:FF:000006">
    <property type="entry name" value="Prolyl 4-hydroxylase subunit alpha 2"/>
    <property type="match status" value="1"/>
</dbReference>
<dbReference type="FunFam" id="2.60.120.620:FF:000001">
    <property type="entry name" value="Prolyl 4-hydroxylase subunit alpha 2"/>
    <property type="match status" value="1"/>
</dbReference>
<dbReference type="Gene3D" id="6.10.140.1460">
    <property type="match status" value="1"/>
</dbReference>
<dbReference type="Gene3D" id="2.60.120.620">
    <property type="entry name" value="q2cbj1_9rhob like domain"/>
    <property type="match status" value="1"/>
</dbReference>
<dbReference type="Gene3D" id="1.25.40.10">
    <property type="entry name" value="Tetratricopeptide repeat domain"/>
    <property type="match status" value="1"/>
</dbReference>
<dbReference type="InterPro" id="IPR005123">
    <property type="entry name" value="Oxoglu/Fe-dep_dioxygenase_dom"/>
</dbReference>
<dbReference type="InterPro" id="IPR045054">
    <property type="entry name" value="P4HA-like"/>
</dbReference>
<dbReference type="InterPro" id="IPR006620">
    <property type="entry name" value="Pro_4_hyd_alph"/>
</dbReference>
<dbReference type="InterPro" id="IPR044862">
    <property type="entry name" value="Pro_4_hyd_alph_FE2OG_OXY"/>
</dbReference>
<dbReference type="InterPro" id="IPR013547">
    <property type="entry name" value="Pro_4_hyd_alph_N"/>
</dbReference>
<dbReference type="InterPro" id="IPR011990">
    <property type="entry name" value="TPR-like_helical_dom_sf"/>
</dbReference>
<dbReference type="InterPro" id="IPR019734">
    <property type="entry name" value="TPR_rpt"/>
</dbReference>
<dbReference type="PANTHER" id="PTHR10869">
    <property type="entry name" value="PROLYL 4-HYDROXYLASE ALPHA SUBUNIT"/>
    <property type="match status" value="1"/>
</dbReference>
<dbReference type="PANTHER" id="PTHR10869:SF244">
    <property type="entry name" value="PROLYL 4-HYDROXYLASE SUBUNIT ALPHA-2"/>
    <property type="match status" value="1"/>
</dbReference>
<dbReference type="Pfam" id="PF13640">
    <property type="entry name" value="2OG-FeII_Oxy_3"/>
    <property type="match status" value="1"/>
</dbReference>
<dbReference type="Pfam" id="PF08336">
    <property type="entry name" value="P4Ha_N"/>
    <property type="match status" value="1"/>
</dbReference>
<dbReference type="Pfam" id="PF23558">
    <property type="entry name" value="TPR_P4H"/>
    <property type="match status" value="1"/>
</dbReference>
<dbReference type="SMART" id="SM00702">
    <property type="entry name" value="P4Hc"/>
    <property type="match status" value="1"/>
</dbReference>
<dbReference type="SUPFAM" id="SSF48452">
    <property type="entry name" value="TPR-like"/>
    <property type="match status" value="1"/>
</dbReference>
<dbReference type="PROSITE" id="PS51471">
    <property type="entry name" value="FE2OG_OXY"/>
    <property type="match status" value="1"/>
</dbReference>
<dbReference type="PROSITE" id="PS50005">
    <property type="entry name" value="TPR"/>
    <property type="match status" value="1"/>
</dbReference>
<dbReference type="PROSITE" id="PS50293">
    <property type="entry name" value="TPR_REGION"/>
    <property type="match status" value="1"/>
</dbReference>
<keyword id="KW-0002">3D-structure</keyword>
<keyword id="KW-0025">Alternative splicing</keyword>
<keyword id="KW-0223">Dioxygenase</keyword>
<keyword id="KW-0225">Disease variant</keyword>
<keyword id="KW-0256">Endoplasmic reticulum</keyword>
<keyword id="KW-0325">Glycoprotein</keyword>
<keyword id="KW-0408">Iron</keyword>
<keyword id="KW-0479">Metal-binding</keyword>
<keyword id="KW-0560">Oxidoreductase</keyword>
<keyword id="KW-1267">Proteomics identification</keyword>
<keyword id="KW-1185">Reference proteome</keyword>
<keyword id="KW-0732">Signal</keyword>
<keyword id="KW-0802">TPR repeat</keyword>
<keyword id="KW-0847">Vitamin C</keyword>
<evidence type="ECO:0000250" key="1">
    <source>
        <dbReference type="UniProtKB" id="Q60716"/>
    </source>
</evidence>
<evidence type="ECO:0000255" key="2"/>
<evidence type="ECO:0000255" key="3">
    <source>
        <dbReference type="PROSITE-ProRule" id="PRU00805"/>
    </source>
</evidence>
<evidence type="ECO:0000269" key="4">
    <source>
    </source>
</evidence>
<evidence type="ECO:0000269" key="5">
    <source>
    </source>
</evidence>
<evidence type="ECO:0000303" key="6">
    <source>
    </source>
</evidence>
<evidence type="ECO:0000303" key="7">
    <source>
    </source>
</evidence>
<evidence type="ECO:0000305" key="8"/>
<evidence type="ECO:0000305" key="9">
    <source>
    </source>
</evidence>
<evidence type="ECO:0007829" key="10">
    <source>
        <dbReference type="PDB" id="6EVN"/>
    </source>
</evidence>
<comment type="function">
    <text evidence="5">Catalyzes the post-translational formation of 4-hydroxyproline in -Xaa-Pro-Gly- sequences in collagens and other proteins.</text>
</comment>
<comment type="catalytic activity">
    <reaction evidence="5">
        <text>L-prolyl-[collagen] + 2-oxoglutarate + O2 = trans-4-hydroxy-L-prolyl-[collagen] + succinate + CO2</text>
        <dbReference type="Rhea" id="RHEA:18945"/>
        <dbReference type="Rhea" id="RHEA-COMP:11676"/>
        <dbReference type="Rhea" id="RHEA-COMP:11680"/>
        <dbReference type="ChEBI" id="CHEBI:15379"/>
        <dbReference type="ChEBI" id="CHEBI:16526"/>
        <dbReference type="ChEBI" id="CHEBI:16810"/>
        <dbReference type="ChEBI" id="CHEBI:30031"/>
        <dbReference type="ChEBI" id="CHEBI:50342"/>
        <dbReference type="ChEBI" id="CHEBI:61965"/>
        <dbReference type="EC" id="1.14.11.2"/>
    </reaction>
</comment>
<comment type="cofactor">
    <cofactor evidence="3">
        <name>Fe(2+)</name>
        <dbReference type="ChEBI" id="CHEBI:29033"/>
    </cofactor>
    <text evidence="3">Binds 1 Fe(2+) ion per subunit.</text>
</comment>
<comment type="cofactor">
    <cofactor evidence="9">
        <name>L-ascorbate</name>
        <dbReference type="ChEBI" id="CHEBI:38290"/>
    </cofactor>
</comment>
<comment type="activity regulation">
    <text evidence="5">Inhibited by poly(L-proline) only at very high concentrations.</text>
</comment>
<comment type="biophysicochemical properties">
    <kinetics>
        <KM evidence="5">22 uM for 2-oxoglutarate</KM>
    </kinetics>
</comment>
<comment type="subunit">
    <text evidence="5">Heterotetramer of two alpha-2 chains and two beta chains (P4HB) (the beta chain is the multi-functional PDI), where P4HB plays the role of a structural subunit; this tetramer catalyzes the formation of 4-hydroxyproline in collagen.</text>
</comment>
<comment type="interaction">
    <interactant intactId="EBI-348033">
        <id>O15460</id>
    </interactant>
    <interactant intactId="EBI-2512228">
        <id>Q2M1P5</id>
        <label>KIF7</label>
    </interactant>
    <organismsDiffer>false</organismsDiffer>
    <experiments>2</experiments>
</comment>
<comment type="interaction">
    <interactant intactId="EBI-348033">
        <id>O15460</id>
    </interactant>
    <interactant intactId="EBI-395883">
        <id>P07237</id>
        <label>P4HB</label>
    </interactant>
    <organismsDiffer>false</organismsDiffer>
    <experiments>3</experiments>
</comment>
<comment type="interaction">
    <interactant intactId="EBI-10182841">
        <id>O15460-2</id>
    </interactant>
    <interactant intactId="EBI-10968534">
        <id>P50570-2</id>
        <label>DNM2</label>
    </interactant>
    <organismsDiffer>false</organismsDiffer>
    <experiments>3</experiments>
</comment>
<comment type="interaction">
    <interactant intactId="EBI-10182841">
        <id>O15460-2</id>
    </interactant>
    <interactant intactId="EBI-741101">
        <id>Q13643</id>
        <label>FHL3</label>
    </interactant>
    <organismsDiffer>false</organismsDiffer>
    <experiments>3</experiments>
</comment>
<comment type="subcellular location">
    <subcellularLocation>
        <location>Endoplasmic reticulum lumen</location>
    </subcellularLocation>
</comment>
<comment type="alternative products">
    <event type="alternative splicing"/>
    <isoform>
        <id>O15460-1</id>
        <name>IIb</name>
        <sequence type="displayed"/>
    </isoform>
    <isoform>
        <id>O15460-2</id>
        <name>IIa</name>
        <sequence type="described" ref="VSP_004506"/>
    </isoform>
</comment>
<comment type="tissue specificity">
    <text evidence="5">Expressed in the heart, placenta, lung and pancreas.</text>
</comment>
<comment type="disease" evidence="4">
    <disease id="DI-04910">
        <name>Myopia 25, autosomal dominant</name>
        <acronym>MYP25</acronym>
        <description>A refractive error of the eye, in which parallel rays from a distant object come to focus in front of the retina, vision being better for near objects than for far.</description>
        <dbReference type="MIM" id="617238"/>
    </disease>
    <text>The disease is caused by variants affecting the gene represented in this entry.</text>
</comment>
<comment type="similarity">
    <text evidence="8">Belongs to the P4HA family.</text>
</comment>
<name>P4HA2_HUMAN</name>
<reference key="1">
    <citation type="journal article" date="1997" name="J. Biol. Chem.">
        <title>Cloning of the human prolyl 4-hydroxylase alpha subunit isoform alpha(II) and characterization of the type II enzyme tetramer. The alpha(I) and alpha(II) subunits do not form a mixed alpha(I)alpha(II)beta2 tetramer.</title>
        <authorList>
            <person name="Annunen P."/>
            <person name="Helaakoski T."/>
            <person name="Myllyharju J."/>
            <person name="Veijola J."/>
            <person name="Pihlajaniemi T."/>
            <person name="Kivirikko K.I."/>
        </authorList>
    </citation>
    <scope>NUCLEOTIDE SEQUENCE [MRNA] (ISOFORM IIB)</scope>
    <scope>FUNCTION</scope>
    <scope>CATALYTIC ACTIVITY</scope>
    <scope>ACTIVITY REGULATION</scope>
    <scope>BIOPHYSICOCHEMICAL PROPERTIES</scope>
    <scope>SUBUNIT</scope>
    <scope>COFACTOR</scope>
    <scope>TISSUE SPECIFICITY</scope>
    <source>
        <tissue>Lung</tissue>
    </source>
</reference>
<reference key="2">
    <citation type="journal article" date="2001" name="Eur. J. Biochem.">
        <title>Characterization of the human and mouse genes for the alpha subunit of type II prolyl 4-hydroxylase. Identification of a previously unknown alternatively spliced exon and its expression in various tissues.</title>
        <authorList>
            <person name="Nokelainen M."/>
            <person name="Nissi R."/>
            <person name="Kukkola L."/>
            <person name="Helaakoski T."/>
            <person name="Myllyharju J."/>
        </authorList>
    </citation>
    <scope>NUCLEOTIDE SEQUENCE (ISOFORMS IIA AND IIB)</scope>
</reference>
<reference key="3">
    <citation type="journal article" date="2003" name="Genome Res.">
        <title>The secreted protein discovery initiative (SPDI), a large-scale effort to identify novel human secreted and transmembrane proteins: a bioinformatics assessment.</title>
        <authorList>
            <person name="Clark H.F."/>
            <person name="Gurney A.L."/>
            <person name="Abaya E."/>
            <person name="Baker K."/>
            <person name="Baldwin D.T."/>
            <person name="Brush J."/>
            <person name="Chen J."/>
            <person name="Chow B."/>
            <person name="Chui C."/>
            <person name="Crowley C."/>
            <person name="Currell B."/>
            <person name="Deuel B."/>
            <person name="Dowd P."/>
            <person name="Eaton D."/>
            <person name="Foster J.S."/>
            <person name="Grimaldi C."/>
            <person name="Gu Q."/>
            <person name="Hass P.E."/>
            <person name="Heldens S."/>
            <person name="Huang A."/>
            <person name="Kim H.S."/>
            <person name="Klimowski L."/>
            <person name="Jin Y."/>
            <person name="Johnson S."/>
            <person name="Lee J."/>
            <person name="Lewis L."/>
            <person name="Liao D."/>
            <person name="Mark M.R."/>
            <person name="Robbie E."/>
            <person name="Sanchez C."/>
            <person name="Schoenfeld J."/>
            <person name="Seshagiri S."/>
            <person name="Simmons L."/>
            <person name="Singh J."/>
            <person name="Smith V."/>
            <person name="Stinson J."/>
            <person name="Vagts A."/>
            <person name="Vandlen R.L."/>
            <person name="Watanabe C."/>
            <person name="Wieand D."/>
            <person name="Woods K."/>
            <person name="Xie M.-H."/>
            <person name="Yansura D.G."/>
            <person name="Yi S."/>
            <person name="Yu G."/>
            <person name="Yuan J."/>
            <person name="Zhang M."/>
            <person name="Zhang Z."/>
            <person name="Goddard A.D."/>
            <person name="Wood W.I."/>
            <person name="Godowski P.J."/>
            <person name="Gray A.M."/>
        </authorList>
    </citation>
    <scope>NUCLEOTIDE SEQUENCE [LARGE SCALE MRNA] (ISOFORM IIA)</scope>
</reference>
<reference key="4">
    <citation type="submission" date="2005-09" db="EMBL/GenBank/DDBJ databases">
        <authorList>
            <person name="Mural R.J."/>
            <person name="Istrail S."/>
            <person name="Sutton G.G."/>
            <person name="Florea L."/>
            <person name="Halpern A.L."/>
            <person name="Mobarry C.M."/>
            <person name="Lippert R."/>
            <person name="Walenz B."/>
            <person name="Shatkay H."/>
            <person name="Dew I."/>
            <person name="Miller J.R."/>
            <person name="Flanigan M.J."/>
            <person name="Edwards N.J."/>
            <person name="Bolanos R."/>
            <person name="Fasulo D."/>
            <person name="Halldorsson B.V."/>
            <person name="Hannenhalli S."/>
            <person name="Turner R."/>
            <person name="Yooseph S."/>
            <person name="Lu F."/>
            <person name="Nusskern D.R."/>
            <person name="Shue B.C."/>
            <person name="Zheng X.H."/>
            <person name="Zhong F."/>
            <person name="Delcher A.L."/>
            <person name="Huson D.H."/>
            <person name="Kravitz S.A."/>
            <person name="Mouchard L."/>
            <person name="Reinert K."/>
            <person name="Remington K.A."/>
            <person name="Clark A.G."/>
            <person name="Waterman M.S."/>
            <person name="Eichler E.E."/>
            <person name="Adams M.D."/>
            <person name="Hunkapiller M.W."/>
            <person name="Myers E.W."/>
            <person name="Venter J.C."/>
        </authorList>
    </citation>
    <scope>NUCLEOTIDE SEQUENCE [LARGE SCALE GENOMIC DNA]</scope>
</reference>
<reference key="5">
    <citation type="journal article" date="2004" name="Genome Res.">
        <title>The status, quality, and expansion of the NIH full-length cDNA project: the Mammalian Gene Collection (MGC).</title>
        <authorList>
            <consortium name="The MGC Project Team"/>
        </authorList>
    </citation>
    <scope>NUCLEOTIDE SEQUENCE [LARGE SCALE MRNA] (ISOFORM IIA)</scope>
    <source>
        <tissue>Brain</tissue>
    </source>
</reference>
<reference key="6">
    <citation type="journal article" date="1995" name="Proc. Natl. Acad. Sci. U.S.A.">
        <title>Cloning, baculovirus expression, and characterization of a second mouse prolyl 4-hydroxylase alpha-subunit isoform: formation of an alpha 2 beta 2 tetramer with the protein disulfide-isomerase/beta subunit.</title>
        <authorList>
            <person name="Helaakoski T."/>
            <person name="Annunen P."/>
            <person name="Vuori K."/>
            <person name="Macneil I.A."/>
            <person name="Pihlajaniemi T."/>
            <person name="Kivirikko K.I."/>
        </authorList>
    </citation>
    <scope>INTERACTION WITH P4HB</scope>
</reference>
<reference key="7">
    <citation type="journal article" date="2011" name="BMC Syst. Biol.">
        <title>Initial characterization of the human central proteome.</title>
        <authorList>
            <person name="Burkard T.R."/>
            <person name="Planyavsky M."/>
            <person name="Kaupe I."/>
            <person name="Breitwieser F.P."/>
            <person name="Buerckstuemmer T."/>
            <person name="Bennett K.L."/>
            <person name="Superti-Furga G."/>
            <person name="Colinge J."/>
        </authorList>
    </citation>
    <scope>IDENTIFICATION BY MASS SPECTROMETRY [LARGE SCALE ANALYSIS]</scope>
</reference>
<reference key="8">
    <citation type="journal article" date="2015" name="Genet. Med.">
        <title>Mutations of P4HA2 encoding prolyl 4-hydroxylase 2 are associated with nonsyndromic high myopia.</title>
        <authorList>
            <person name="Guo H."/>
            <person name="Tong P."/>
            <person name="Liu Y."/>
            <person name="Xia L."/>
            <person name="Wang T."/>
            <person name="Tian Q."/>
            <person name="Li Y."/>
            <person name="Hu Y."/>
            <person name="Zheng Y."/>
            <person name="Jin X."/>
            <person name="Li Y."/>
            <person name="Xiong W."/>
            <person name="Tang B."/>
            <person name="Feng Y."/>
            <person name="Li J."/>
            <person name="Pan Q."/>
            <person name="Hu Z."/>
            <person name="Xia K."/>
        </authorList>
    </citation>
    <scope>INVOLVEMENT IN MYP25</scope>
    <scope>VARIANTS IN MYP25 ARG-140; VAL-150 AND LYS-291</scope>
    <scope>CHARACTERIZATION OF VARIANT MYP25 LYS-291</scope>
</reference>